<proteinExistence type="inferred from homology"/>
<sequence>MKFTIMSKGDQSSDTLASTMKEYLLDFGFIMDEQEPDIVISVGGDGTLLYAFHRYYNRLDETAFVGVHTGHLGFYADWLPTEVEKLVIAIAKTPFQVVEYPLLEVIIRYMNGSKESQYLAMNEATVKSAEGTLVTEVEIRGEYFETFRGDGLCISTPSGSTAYNKALGGAIIHPSIEAIQIAEMASINNRVFRTVGSPLVLPKHHTCVLKPTAGMNLQITVDHLTMVHQDVKSIQYRVANEKVRFVRFRPFPFWKRVRDSFVADK</sequence>
<evidence type="ECO:0000255" key="1">
    <source>
        <dbReference type="HAMAP-Rule" id="MF_00361"/>
    </source>
</evidence>
<gene>
    <name evidence="1" type="primary">nadK1</name>
    <name type="ordered locus">BT9727_1102</name>
</gene>
<dbReference type="EC" id="2.7.1.23" evidence="1"/>
<dbReference type="EMBL" id="AE017355">
    <property type="protein sequence ID" value="AAT59333.1"/>
    <property type="molecule type" value="Genomic_DNA"/>
</dbReference>
<dbReference type="RefSeq" id="WP_000673194.1">
    <property type="nucleotide sequence ID" value="NC_005957.1"/>
</dbReference>
<dbReference type="RefSeq" id="YP_035439.1">
    <property type="nucleotide sequence ID" value="NC_005957.1"/>
</dbReference>
<dbReference type="SMR" id="Q6HLY2"/>
<dbReference type="KEGG" id="btk:BT9727_1102"/>
<dbReference type="PATRIC" id="fig|281309.8.peg.1161"/>
<dbReference type="HOGENOM" id="CLU_008831_0_3_9"/>
<dbReference type="Proteomes" id="UP000001301">
    <property type="component" value="Chromosome"/>
</dbReference>
<dbReference type="GO" id="GO:0005737">
    <property type="term" value="C:cytoplasm"/>
    <property type="evidence" value="ECO:0007669"/>
    <property type="project" value="UniProtKB-SubCell"/>
</dbReference>
<dbReference type="GO" id="GO:0005524">
    <property type="term" value="F:ATP binding"/>
    <property type="evidence" value="ECO:0007669"/>
    <property type="project" value="UniProtKB-KW"/>
</dbReference>
<dbReference type="GO" id="GO:0046872">
    <property type="term" value="F:metal ion binding"/>
    <property type="evidence" value="ECO:0007669"/>
    <property type="project" value="UniProtKB-UniRule"/>
</dbReference>
<dbReference type="GO" id="GO:0051287">
    <property type="term" value="F:NAD binding"/>
    <property type="evidence" value="ECO:0007669"/>
    <property type="project" value="UniProtKB-ARBA"/>
</dbReference>
<dbReference type="GO" id="GO:0003951">
    <property type="term" value="F:NAD+ kinase activity"/>
    <property type="evidence" value="ECO:0007669"/>
    <property type="project" value="UniProtKB-UniRule"/>
</dbReference>
<dbReference type="GO" id="GO:0019674">
    <property type="term" value="P:NAD metabolic process"/>
    <property type="evidence" value="ECO:0007669"/>
    <property type="project" value="InterPro"/>
</dbReference>
<dbReference type="GO" id="GO:0006741">
    <property type="term" value="P:NADP biosynthetic process"/>
    <property type="evidence" value="ECO:0007669"/>
    <property type="project" value="UniProtKB-UniRule"/>
</dbReference>
<dbReference type="FunFam" id="2.60.200.30:FF:000002">
    <property type="entry name" value="NAD kinase"/>
    <property type="match status" value="1"/>
</dbReference>
<dbReference type="Gene3D" id="3.40.50.10330">
    <property type="entry name" value="Probable inorganic polyphosphate/atp-NAD kinase, domain 1"/>
    <property type="match status" value="1"/>
</dbReference>
<dbReference type="Gene3D" id="2.60.200.30">
    <property type="entry name" value="Probable inorganic polyphosphate/atp-NAD kinase, domain 2"/>
    <property type="match status" value="1"/>
</dbReference>
<dbReference type="HAMAP" id="MF_00361">
    <property type="entry name" value="NAD_kinase"/>
    <property type="match status" value="1"/>
</dbReference>
<dbReference type="InterPro" id="IPR017438">
    <property type="entry name" value="ATP-NAD_kinase_N"/>
</dbReference>
<dbReference type="InterPro" id="IPR017437">
    <property type="entry name" value="ATP-NAD_kinase_PpnK-typ_C"/>
</dbReference>
<dbReference type="InterPro" id="IPR016064">
    <property type="entry name" value="NAD/diacylglycerol_kinase_sf"/>
</dbReference>
<dbReference type="InterPro" id="IPR002504">
    <property type="entry name" value="NADK"/>
</dbReference>
<dbReference type="NCBIfam" id="NF003424">
    <property type="entry name" value="PRK04885.1"/>
    <property type="match status" value="1"/>
</dbReference>
<dbReference type="PANTHER" id="PTHR20275">
    <property type="entry name" value="NAD KINASE"/>
    <property type="match status" value="1"/>
</dbReference>
<dbReference type="PANTHER" id="PTHR20275:SF0">
    <property type="entry name" value="NAD KINASE"/>
    <property type="match status" value="1"/>
</dbReference>
<dbReference type="Pfam" id="PF01513">
    <property type="entry name" value="NAD_kinase"/>
    <property type="match status" value="1"/>
</dbReference>
<dbReference type="Pfam" id="PF20143">
    <property type="entry name" value="NAD_kinase_C"/>
    <property type="match status" value="1"/>
</dbReference>
<dbReference type="SUPFAM" id="SSF111331">
    <property type="entry name" value="NAD kinase/diacylglycerol kinase-like"/>
    <property type="match status" value="1"/>
</dbReference>
<accession>Q6HLY2</accession>
<feature type="chain" id="PRO_0000229606" description="NAD kinase 1">
    <location>
        <begin position="1"/>
        <end position="265"/>
    </location>
</feature>
<feature type="active site" description="Proton acceptor" evidence="1">
    <location>
        <position position="45"/>
    </location>
</feature>
<feature type="binding site" evidence="1">
    <location>
        <begin position="45"/>
        <end position="46"/>
    </location>
    <ligand>
        <name>NAD(+)</name>
        <dbReference type="ChEBI" id="CHEBI:57540"/>
    </ligand>
</feature>
<feature type="binding site" evidence="1">
    <location>
        <begin position="122"/>
        <end position="123"/>
    </location>
    <ligand>
        <name>NAD(+)</name>
        <dbReference type="ChEBI" id="CHEBI:57540"/>
    </ligand>
</feature>
<feature type="binding site" evidence="1">
    <location>
        <position position="148"/>
    </location>
    <ligand>
        <name>NAD(+)</name>
        <dbReference type="ChEBI" id="CHEBI:57540"/>
    </ligand>
</feature>
<feature type="binding site" evidence="1">
    <location>
        <position position="150"/>
    </location>
    <ligand>
        <name>NAD(+)</name>
        <dbReference type="ChEBI" id="CHEBI:57540"/>
    </ligand>
</feature>
<feature type="binding site" evidence="1">
    <location>
        <position position="185"/>
    </location>
    <ligand>
        <name>NAD(+)</name>
        <dbReference type="ChEBI" id="CHEBI:57540"/>
    </ligand>
</feature>
<reference key="1">
    <citation type="journal article" date="2006" name="J. Bacteriol.">
        <title>Pathogenomic sequence analysis of Bacillus cereus and Bacillus thuringiensis isolates closely related to Bacillus anthracis.</title>
        <authorList>
            <person name="Han C.S."/>
            <person name="Xie G."/>
            <person name="Challacombe J.F."/>
            <person name="Altherr M.R."/>
            <person name="Bhotika S.S."/>
            <person name="Bruce D."/>
            <person name="Campbell C.S."/>
            <person name="Campbell M.L."/>
            <person name="Chen J."/>
            <person name="Chertkov O."/>
            <person name="Cleland C."/>
            <person name="Dimitrijevic M."/>
            <person name="Doggett N.A."/>
            <person name="Fawcett J.J."/>
            <person name="Glavina T."/>
            <person name="Goodwin L.A."/>
            <person name="Hill K.K."/>
            <person name="Hitchcock P."/>
            <person name="Jackson P.J."/>
            <person name="Keim P."/>
            <person name="Kewalramani A.R."/>
            <person name="Longmire J."/>
            <person name="Lucas S."/>
            <person name="Malfatti S."/>
            <person name="McMurry K."/>
            <person name="Meincke L.J."/>
            <person name="Misra M."/>
            <person name="Moseman B.L."/>
            <person name="Mundt M."/>
            <person name="Munk A.C."/>
            <person name="Okinaka R.T."/>
            <person name="Parson-Quintana B."/>
            <person name="Reilly L.P."/>
            <person name="Richardson P."/>
            <person name="Robinson D.L."/>
            <person name="Rubin E."/>
            <person name="Saunders E."/>
            <person name="Tapia R."/>
            <person name="Tesmer J.G."/>
            <person name="Thayer N."/>
            <person name="Thompson L.S."/>
            <person name="Tice H."/>
            <person name="Ticknor L.O."/>
            <person name="Wills P.L."/>
            <person name="Brettin T.S."/>
            <person name="Gilna P."/>
        </authorList>
    </citation>
    <scope>NUCLEOTIDE SEQUENCE [LARGE SCALE GENOMIC DNA]</scope>
    <source>
        <strain>97-27</strain>
    </source>
</reference>
<protein>
    <recommendedName>
        <fullName evidence="1">NAD kinase 1</fullName>
        <ecNumber evidence="1">2.7.1.23</ecNumber>
    </recommendedName>
    <alternativeName>
        <fullName evidence="1">ATP-dependent NAD kinase 1</fullName>
    </alternativeName>
</protein>
<keyword id="KW-0067">ATP-binding</keyword>
<keyword id="KW-0963">Cytoplasm</keyword>
<keyword id="KW-0418">Kinase</keyword>
<keyword id="KW-0520">NAD</keyword>
<keyword id="KW-0521">NADP</keyword>
<keyword id="KW-0547">Nucleotide-binding</keyword>
<keyword id="KW-0808">Transferase</keyword>
<name>NADK1_BACHK</name>
<organism>
    <name type="scientific">Bacillus thuringiensis subsp. konkukian (strain 97-27)</name>
    <dbReference type="NCBI Taxonomy" id="281309"/>
    <lineage>
        <taxon>Bacteria</taxon>
        <taxon>Bacillati</taxon>
        <taxon>Bacillota</taxon>
        <taxon>Bacilli</taxon>
        <taxon>Bacillales</taxon>
        <taxon>Bacillaceae</taxon>
        <taxon>Bacillus</taxon>
        <taxon>Bacillus cereus group</taxon>
    </lineage>
</organism>
<comment type="function">
    <text evidence="1">Involved in the regulation of the intracellular balance of NAD and NADP, and is a key enzyme in the biosynthesis of NADP. Catalyzes specifically the phosphorylation on 2'-hydroxyl of the adenosine moiety of NAD to yield NADP.</text>
</comment>
<comment type="catalytic activity">
    <reaction evidence="1">
        <text>NAD(+) + ATP = ADP + NADP(+) + H(+)</text>
        <dbReference type="Rhea" id="RHEA:18629"/>
        <dbReference type="ChEBI" id="CHEBI:15378"/>
        <dbReference type="ChEBI" id="CHEBI:30616"/>
        <dbReference type="ChEBI" id="CHEBI:57540"/>
        <dbReference type="ChEBI" id="CHEBI:58349"/>
        <dbReference type="ChEBI" id="CHEBI:456216"/>
        <dbReference type="EC" id="2.7.1.23"/>
    </reaction>
</comment>
<comment type="cofactor">
    <cofactor evidence="1">
        <name>a divalent metal cation</name>
        <dbReference type="ChEBI" id="CHEBI:60240"/>
    </cofactor>
</comment>
<comment type="subcellular location">
    <subcellularLocation>
        <location evidence="1">Cytoplasm</location>
    </subcellularLocation>
</comment>
<comment type="similarity">
    <text evidence="1">Belongs to the NAD kinase family.</text>
</comment>